<organism>
    <name type="scientific">Homo sapiens</name>
    <name type="common">Human</name>
    <dbReference type="NCBI Taxonomy" id="9606"/>
    <lineage>
        <taxon>Eukaryota</taxon>
        <taxon>Metazoa</taxon>
        <taxon>Chordata</taxon>
        <taxon>Craniata</taxon>
        <taxon>Vertebrata</taxon>
        <taxon>Euteleostomi</taxon>
        <taxon>Mammalia</taxon>
        <taxon>Eutheria</taxon>
        <taxon>Euarchontoglires</taxon>
        <taxon>Primates</taxon>
        <taxon>Haplorrhini</taxon>
        <taxon>Catarrhini</taxon>
        <taxon>Hominidae</taxon>
        <taxon>Homo</taxon>
    </lineage>
</organism>
<accession>Q9UM07</accession>
<accession>A8K392</accession>
<accession>B2RBW0</accession>
<accession>Q5VTZ8</accession>
<accession>Q70SX4</accession>
<protein>
    <recommendedName>
        <fullName>Protein-arginine deiminase type-4</fullName>
        <ecNumber evidence="13 17">3.5.3.15</ecNumber>
    </recommendedName>
    <alternativeName>
        <fullName>HL-60 PAD</fullName>
    </alternativeName>
    <alternativeName>
        <fullName>Peptidylarginine deiminase IV</fullName>
    </alternativeName>
    <alternativeName>
        <fullName>Protein-arginine deiminase type IV</fullName>
    </alternativeName>
</protein>
<comment type="function">
    <text evidence="1 8 9 12 13 15 17">Catalyzes the citrullination/deimination of arginine residues of proteins such as histones, thereby playing a key role in histone code and regulation of stem cell maintenance (PubMed:15339660, PubMed:15345777, PubMed:16567635, PubMed:21245532). Citrullinates histone H1 at 'Arg-54' (to form H1R54ci), histone H3 at 'Arg-2', 'Arg-8', 'Arg-17' and/or 'Arg-26' (to form H3R2ci, H3R8ci, H3R17ci, H3R26ci, respectively) and histone H4 at 'Arg-3' (to form H4R3ci) (PubMed:15339660, PubMed:15345777, PubMed:16567635, PubMed:21245532). Acts as a key regulator of stem cell maintenance by mediating citrullination of histone H1: citrullination of 'Arg-54' of histone H1 (H1R54ci) results in H1 displacement from chromatin and global chromatin decondensation, thereby promoting pluripotency and stem cell maintenance (PubMed:15339660, PubMed:15345777, PubMed:16567635, PubMed:21245532). Promotes profound chromatin decondensation during the innate immune response to infection in neutrophils by mediating formation of H1R54ci (PubMed:18209087). Required for the formation of neutrophil extracellular traps (NETs); NETs are mainly composed of DNA fibers and are released by neutrophils to bind pathogens during inflammation (By similarity). Citrullination of histone H3 prevents their methylation by CARM1 and HRMT1L2/PRMT1 and represses transcription (PubMed:15345777). Citrullinates EP300/P300 at 'Arg-2142', which favors its interaction with NCOA2/GRIP1 (PubMed:15731352).</text>
</comment>
<comment type="catalytic activity">
    <reaction evidence="13 17">
        <text>L-arginyl-[protein] + H2O = L-citrullyl-[protein] + NH4(+)</text>
        <dbReference type="Rhea" id="RHEA:18089"/>
        <dbReference type="Rhea" id="RHEA-COMP:10532"/>
        <dbReference type="Rhea" id="RHEA-COMP:10588"/>
        <dbReference type="ChEBI" id="CHEBI:15377"/>
        <dbReference type="ChEBI" id="CHEBI:28938"/>
        <dbReference type="ChEBI" id="CHEBI:29965"/>
        <dbReference type="ChEBI" id="CHEBI:83397"/>
        <dbReference type="EC" id="3.5.3.15"/>
    </reaction>
</comment>
<comment type="cofactor">
    <cofactor evidence="11 13 14">
        <name>Ca(2+)</name>
        <dbReference type="ChEBI" id="CHEBI:29108"/>
    </cofactor>
    <text evidence="11 13 14">Binds 5 Ca(2+) ions per subunit.</text>
</comment>
<comment type="activity regulation">
    <text evidence="14 18 19">Strongly Inhibited by F-amidine and N-alpha-benzoyl-N5-(2-chloro-1-iminoethyl)-L-ornithine amide (Cl-amidine). These inhibitors are however not specific to PADI4 and also inhibit other members of the family (PubMed:17002273). Incorporation of a carboxylate ortho to the backbone amide of Cl-amidine results in inhibitors with increased specificity for PADI4: N-alpha-(2-carboxyl)benzoyl-N(5)-(2-fluoro-1-iminoethyl)-L-ornithine amide (o-F-amidine) and N-alpha-(2-carboxyl)benzoyl-N(5)-(2-chloro-1-iminoethyl)-L-ornithine amide (o-Cl-amidine) (PubMed:21882827). Strongly and specifically inhibited by Thr-Asp-F-amidine (TDFA); other members of the family are not inhibited (PubMed:22004374).</text>
</comment>
<comment type="biophysicochemical properties">
    <kinetics>
        <KM evidence="11">0.055 mM for fibrinogen</KM>
        <KM evidence="11">0.064 mM for filaggrin</KM>
        <Vmax evidence="11">33.2 umol/h/mg enzyme toward fibrinogen</Vmax>
        <Vmax evidence="11">8.0 umol/h/mg enzyme toward filaggrin</Vmax>
    </kinetics>
    <phDependence>
        <text evidence="11">Optimum pH is 6.5-9.0.</text>
    </phDependence>
</comment>
<comment type="interaction">
    <interactant intactId="EBI-1042511">
        <id>Q9UM07</id>
    </interactant>
    <interactant intactId="EBI-2556852">
        <id>P09525</id>
        <label>ANXA4</label>
    </interactant>
    <organismsDiffer>false</organismsDiffer>
    <experiments>8</experiments>
</comment>
<comment type="interaction">
    <interactant intactId="EBI-1042511">
        <id>Q9UM07</id>
    </interactant>
    <interactant intactId="EBI-12029004">
        <id>P78424</id>
        <label>POU6F2</label>
    </interactant>
    <organismsDiffer>false</organismsDiffer>
    <experiments>3</experiments>
</comment>
<comment type="interaction">
    <interactant intactId="EBI-1042511">
        <id>Q9UM07</id>
    </interactant>
    <interactant intactId="EBI-492476">
        <id>Q96RU7</id>
        <label>TRIB3</label>
    </interactant>
    <organismsDiffer>false</organismsDiffer>
    <experiments>3</experiments>
</comment>
<comment type="subcellular location">
    <subcellularLocation>
        <location evidence="11">Cytoplasm</location>
    </subcellularLocation>
    <subcellularLocation>
        <location evidence="11">Nucleus</location>
    </subcellularLocation>
    <subcellularLocation>
        <location evidence="3">Cytoplasmic granule</location>
    </subcellularLocation>
    <text evidence="3">Cytoplasmic granules of eosinophils and neutrophils.</text>
</comment>
<comment type="tissue specificity">
    <text evidence="3">Expressed in eosinophils and neutrophils, not expressed in peripheral monocytes or lymphocytes.</text>
</comment>
<comment type="PTM">
    <text evidence="16">Autocitrullination at Arg-372 and Arg-374 inactivates the enzyme.</text>
</comment>
<comment type="disease" evidence="4">
    <disease id="DI-02692">
        <name>Rheumatoid arthritis</name>
        <acronym>RA</acronym>
        <description>An inflammatory disease with autoimmune features and a complex genetic component. It primarily affects the joints and is characterized by inflammatory changes in the synovial membranes and articular structures, widespread fibrinoid degeneration of the collagen fibers in mesenchymal tissues, and by atrophy and rarefaction of bony structures.</description>
        <dbReference type="MIM" id="180300"/>
    </disease>
    <text evidence="4 17">The gene represented in this entry may be involved in disease pathogenesis. The association to rheumatoid arthritis was initially thought to result from increased citrullination of target proteins (PubMed:12833157). However, variants that have been associated to rheumatoid arthritis (Ser-55, Ala-82 and Ala-112) do not affect the catalytic activity or the citrullination activity of PADI4, suggesting that these variants may affect the mRNA stability rather than the protein (PubMed:21245532).</text>
</comment>
<comment type="similarity">
    <text evidence="20">Belongs to the protein arginine deiminase family.</text>
</comment>
<gene>
    <name type="primary">PADI4</name>
    <name type="synonym">PAD4</name>
    <name type="synonym">PADI5</name>
    <name type="synonym">PDI5</name>
</gene>
<proteinExistence type="evidence at protein level"/>
<sequence>MAQGTLIRVTPEQPTHAVCVLGTLTQLDICSSAPEDCTSFSINASPGVVVDIAHGPPAKKKSTGSSTWPLDPGVEVTLTMKVASGSTGDQKVQISYYGPKTPPVKALLYLTGVEISLCADITRTGKVKPTRAVKDQRTWTWGPCGQGAILLVNCDRDNLESSAMDCEDDEVLDSEDLQDMSLMTLSTKTPKDFFTNHTLVLHVARSEMDKVRVFQATRGKLSSKCSVVLGPKWPSHYLMVPGGKHNMDFYVEALAFPDTDFPGLITLTISLLDTSNLELPEAVVFQDSVVFRVAPWIMTPNTQPPQEVYACSIFENEDFLKSVTTLAMKAKCKLTICPEEENMDDQWMQDEMEIGYIQAPHKTLPVVFDSPRNRGLKEFPIKRVMGPDFGYVTRGPQTGGISGLDSFGNLEVSPPVTVRGKEYPLGRILFGDSCYPSNDSRQMHQALQDFLSAQQVQAPVKLYSDWLSVGHVDEFLSFVPAPDRKGFRLLLASPRSCYKLFQEQQNEGHGEALLFEGIKKKKQQKIKNILSNKTLREHNSFVERCIDWNRELLKRELGLAESDIIDIPQLFKLKEFSKAEAFFPNMVNMLVLGKHLGIPKPFGPVINGRCCLEEKVCSLLEPLGLQCTFINDFFTYHIRHGEVHCGTNVRRKPFSFKWWNMVP</sequence>
<evidence type="ECO:0000250" key="1">
    <source>
        <dbReference type="UniProtKB" id="Q9Z183"/>
    </source>
</evidence>
<evidence type="ECO:0000269" key="2">
    <source>
    </source>
</evidence>
<evidence type="ECO:0000269" key="3">
    <source>
    </source>
</evidence>
<evidence type="ECO:0000269" key="4">
    <source>
    </source>
</evidence>
<evidence type="ECO:0000269" key="5">
    <source>
    </source>
</evidence>
<evidence type="ECO:0000269" key="6">
    <source>
    </source>
</evidence>
<evidence type="ECO:0000269" key="7">
    <source>
    </source>
</evidence>
<evidence type="ECO:0000269" key="8">
    <source>
    </source>
</evidence>
<evidence type="ECO:0000269" key="9">
    <source>
    </source>
</evidence>
<evidence type="ECO:0000269" key="10">
    <source>
    </source>
</evidence>
<evidence type="ECO:0000269" key="11">
    <source>
    </source>
</evidence>
<evidence type="ECO:0000269" key="12">
    <source>
    </source>
</evidence>
<evidence type="ECO:0000269" key="13">
    <source>
    </source>
</evidence>
<evidence type="ECO:0000269" key="14">
    <source>
    </source>
</evidence>
<evidence type="ECO:0000269" key="15">
    <source>
    </source>
</evidence>
<evidence type="ECO:0000269" key="16">
    <source>
    </source>
</evidence>
<evidence type="ECO:0000269" key="17">
    <source>
    </source>
</evidence>
<evidence type="ECO:0000269" key="18">
    <source>
    </source>
</evidence>
<evidence type="ECO:0000269" key="19">
    <source>
    </source>
</evidence>
<evidence type="ECO:0000305" key="20"/>
<evidence type="ECO:0007744" key="21">
    <source>
        <dbReference type="PDB" id="4DKT"/>
    </source>
</evidence>
<evidence type="ECO:0007829" key="22">
    <source>
        <dbReference type="PDB" id="1WD8"/>
    </source>
</evidence>
<evidence type="ECO:0007829" key="23">
    <source>
        <dbReference type="PDB" id="2DEW"/>
    </source>
</evidence>
<evidence type="ECO:0007829" key="24">
    <source>
        <dbReference type="PDB" id="2DEX"/>
    </source>
</evidence>
<evidence type="ECO:0007829" key="25">
    <source>
        <dbReference type="PDB" id="2DEY"/>
    </source>
</evidence>
<evidence type="ECO:0007829" key="26">
    <source>
        <dbReference type="PDB" id="3B1U"/>
    </source>
</evidence>
<evidence type="ECO:0007829" key="27">
    <source>
        <dbReference type="PDB" id="4X8C"/>
    </source>
</evidence>
<evidence type="ECO:0007829" key="28">
    <source>
        <dbReference type="PDB" id="4X8G"/>
    </source>
</evidence>
<evidence type="ECO:0007829" key="29">
    <source>
        <dbReference type="PDB" id="5N0M"/>
    </source>
</evidence>
<evidence type="ECO:0007829" key="30">
    <source>
        <dbReference type="PDB" id="8SMK"/>
    </source>
</evidence>
<reference key="1">
    <citation type="journal article" date="1999" name="J. Biol. Chem.">
        <title>Molecular characterization of peptidylarginine deiminase in HL-60 cells induced by retinoic acid and 1alpha,25-dihydroxyvitamin D(3).</title>
        <authorList>
            <person name="Nakashima K."/>
            <person name="Hagiwara T."/>
            <person name="Ishigami A."/>
            <person name="Nagata S."/>
            <person name="Asaga H."/>
            <person name="Kuramoto M."/>
            <person name="Senshu T."/>
            <person name="Yamada M."/>
        </authorList>
    </citation>
    <scope>NUCLEOTIDE SEQUENCE [MRNA]</scope>
    <scope>VARIANTS SER-55; ALA-82 AND ALA-112</scope>
</reference>
<reference key="2">
    <citation type="journal article" date="2004" name="Gene">
        <title>Comparative analysis of the mouse and human peptidylarginine deiminase gene clusters reveals highly conserved non-coding segments and a new human gene, PADI6.</title>
        <authorList>
            <person name="Chavanas S."/>
            <person name="Mechin M.-C."/>
            <person name="Takahara H."/>
            <person name="Kawada A."/>
            <person name="Nachat R."/>
            <person name="Serre G."/>
            <person name="Simon M."/>
        </authorList>
    </citation>
    <scope>NUCLEOTIDE SEQUENCE [GENOMIC DNA]</scope>
    <scope>VARIANT PHE-275</scope>
</reference>
<reference key="3">
    <citation type="journal article" date="2004" name="Nat. Genet.">
        <title>Complete sequencing and characterization of 21,243 full-length human cDNAs.</title>
        <authorList>
            <person name="Ota T."/>
            <person name="Suzuki Y."/>
            <person name="Nishikawa T."/>
            <person name="Otsuki T."/>
            <person name="Sugiyama T."/>
            <person name="Irie R."/>
            <person name="Wakamatsu A."/>
            <person name="Hayashi K."/>
            <person name="Sato H."/>
            <person name="Nagai K."/>
            <person name="Kimura K."/>
            <person name="Makita H."/>
            <person name="Sekine M."/>
            <person name="Obayashi M."/>
            <person name="Nishi T."/>
            <person name="Shibahara T."/>
            <person name="Tanaka T."/>
            <person name="Ishii S."/>
            <person name="Yamamoto J."/>
            <person name="Saito K."/>
            <person name="Kawai Y."/>
            <person name="Isono Y."/>
            <person name="Nakamura Y."/>
            <person name="Nagahari K."/>
            <person name="Murakami K."/>
            <person name="Yasuda T."/>
            <person name="Iwayanagi T."/>
            <person name="Wagatsuma M."/>
            <person name="Shiratori A."/>
            <person name="Sudo H."/>
            <person name="Hosoiri T."/>
            <person name="Kaku Y."/>
            <person name="Kodaira H."/>
            <person name="Kondo H."/>
            <person name="Sugawara M."/>
            <person name="Takahashi M."/>
            <person name="Kanda K."/>
            <person name="Yokoi T."/>
            <person name="Furuya T."/>
            <person name="Kikkawa E."/>
            <person name="Omura Y."/>
            <person name="Abe K."/>
            <person name="Kamihara K."/>
            <person name="Katsuta N."/>
            <person name="Sato K."/>
            <person name="Tanikawa M."/>
            <person name="Yamazaki M."/>
            <person name="Ninomiya K."/>
            <person name="Ishibashi T."/>
            <person name="Yamashita H."/>
            <person name="Murakawa K."/>
            <person name="Fujimori K."/>
            <person name="Tanai H."/>
            <person name="Kimata M."/>
            <person name="Watanabe M."/>
            <person name="Hiraoka S."/>
            <person name="Chiba Y."/>
            <person name="Ishida S."/>
            <person name="Ono Y."/>
            <person name="Takiguchi S."/>
            <person name="Watanabe S."/>
            <person name="Yosida M."/>
            <person name="Hotuta T."/>
            <person name="Kusano J."/>
            <person name="Kanehori K."/>
            <person name="Takahashi-Fujii A."/>
            <person name="Hara H."/>
            <person name="Tanase T.-O."/>
            <person name="Nomura Y."/>
            <person name="Togiya S."/>
            <person name="Komai F."/>
            <person name="Hara R."/>
            <person name="Takeuchi K."/>
            <person name="Arita M."/>
            <person name="Imose N."/>
            <person name="Musashino K."/>
            <person name="Yuuki H."/>
            <person name="Oshima A."/>
            <person name="Sasaki N."/>
            <person name="Aotsuka S."/>
            <person name="Yoshikawa Y."/>
            <person name="Matsunawa H."/>
            <person name="Ichihara T."/>
            <person name="Shiohata N."/>
            <person name="Sano S."/>
            <person name="Moriya S."/>
            <person name="Momiyama H."/>
            <person name="Satoh N."/>
            <person name="Takami S."/>
            <person name="Terashima Y."/>
            <person name="Suzuki O."/>
            <person name="Nakagawa S."/>
            <person name="Senoh A."/>
            <person name="Mizoguchi H."/>
            <person name="Goto Y."/>
            <person name="Shimizu F."/>
            <person name="Wakebe H."/>
            <person name="Hishigaki H."/>
            <person name="Watanabe T."/>
            <person name="Sugiyama A."/>
            <person name="Takemoto M."/>
            <person name="Kawakami B."/>
            <person name="Yamazaki M."/>
            <person name="Watanabe K."/>
            <person name="Kumagai A."/>
            <person name="Itakura S."/>
            <person name="Fukuzumi Y."/>
            <person name="Fujimori Y."/>
            <person name="Komiyama M."/>
            <person name="Tashiro H."/>
            <person name="Tanigami A."/>
            <person name="Fujiwara T."/>
            <person name="Ono T."/>
            <person name="Yamada K."/>
            <person name="Fujii Y."/>
            <person name="Ozaki K."/>
            <person name="Hirao M."/>
            <person name="Ohmori Y."/>
            <person name="Kawabata A."/>
            <person name="Hikiji T."/>
            <person name="Kobatake N."/>
            <person name="Inagaki H."/>
            <person name="Ikema Y."/>
            <person name="Okamoto S."/>
            <person name="Okitani R."/>
            <person name="Kawakami T."/>
            <person name="Noguchi S."/>
            <person name="Itoh T."/>
            <person name="Shigeta K."/>
            <person name="Senba T."/>
            <person name="Matsumura K."/>
            <person name="Nakajima Y."/>
            <person name="Mizuno T."/>
            <person name="Morinaga M."/>
            <person name="Sasaki M."/>
            <person name="Togashi T."/>
            <person name="Oyama M."/>
            <person name="Hata H."/>
            <person name="Watanabe M."/>
            <person name="Komatsu T."/>
            <person name="Mizushima-Sugano J."/>
            <person name="Satoh T."/>
            <person name="Shirai Y."/>
            <person name="Takahashi Y."/>
            <person name="Nakagawa K."/>
            <person name="Okumura K."/>
            <person name="Nagase T."/>
            <person name="Nomura N."/>
            <person name="Kikuchi H."/>
            <person name="Masuho Y."/>
            <person name="Yamashita R."/>
            <person name="Nakai K."/>
            <person name="Yada T."/>
            <person name="Nakamura Y."/>
            <person name="Ohara O."/>
            <person name="Isogai T."/>
            <person name="Sugano S."/>
        </authorList>
    </citation>
    <scope>NUCLEOTIDE SEQUENCE [LARGE SCALE MRNA]</scope>
    <source>
        <tissue>Brain</tissue>
    </source>
</reference>
<reference key="4">
    <citation type="journal article" date="2006" name="Nature">
        <title>The DNA sequence and biological annotation of human chromosome 1.</title>
        <authorList>
            <person name="Gregory S.G."/>
            <person name="Barlow K.F."/>
            <person name="McLay K.E."/>
            <person name="Kaul R."/>
            <person name="Swarbreck D."/>
            <person name="Dunham A."/>
            <person name="Scott C.E."/>
            <person name="Howe K.L."/>
            <person name="Woodfine K."/>
            <person name="Spencer C.C.A."/>
            <person name="Jones M.C."/>
            <person name="Gillson C."/>
            <person name="Searle S."/>
            <person name="Zhou Y."/>
            <person name="Kokocinski F."/>
            <person name="McDonald L."/>
            <person name="Evans R."/>
            <person name="Phillips K."/>
            <person name="Atkinson A."/>
            <person name="Cooper R."/>
            <person name="Jones C."/>
            <person name="Hall R.E."/>
            <person name="Andrews T.D."/>
            <person name="Lloyd C."/>
            <person name="Ainscough R."/>
            <person name="Almeida J.P."/>
            <person name="Ambrose K.D."/>
            <person name="Anderson F."/>
            <person name="Andrew R.W."/>
            <person name="Ashwell R.I.S."/>
            <person name="Aubin K."/>
            <person name="Babbage A.K."/>
            <person name="Bagguley C.L."/>
            <person name="Bailey J."/>
            <person name="Beasley H."/>
            <person name="Bethel G."/>
            <person name="Bird C.P."/>
            <person name="Bray-Allen S."/>
            <person name="Brown J.Y."/>
            <person name="Brown A.J."/>
            <person name="Buckley D."/>
            <person name="Burton J."/>
            <person name="Bye J."/>
            <person name="Carder C."/>
            <person name="Chapman J.C."/>
            <person name="Clark S.Y."/>
            <person name="Clarke G."/>
            <person name="Clee C."/>
            <person name="Cobley V."/>
            <person name="Collier R.E."/>
            <person name="Corby N."/>
            <person name="Coville G.J."/>
            <person name="Davies J."/>
            <person name="Deadman R."/>
            <person name="Dunn M."/>
            <person name="Earthrowl M."/>
            <person name="Ellington A.G."/>
            <person name="Errington H."/>
            <person name="Frankish A."/>
            <person name="Frankland J."/>
            <person name="French L."/>
            <person name="Garner P."/>
            <person name="Garnett J."/>
            <person name="Gay L."/>
            <person name="Ghori M.R.J."/>
            <person name="Gibson R."/>
            <person name="Gilby L.M."/>
            <person name="Gillett W."/>
            <person name="Glithero R.J."/>
            <person name="Grafham D.V."/>
            <person name="Griffiths C."/>
            <person name="Griffiths-Jones S."/>
            <person name="Grocock R."/>
            <person name="Hammond S."/>
            <person name="Harrison E.S.I."/>
            <person name="Hart E."/>
            <person name="Haugen E."/>
            <person name="Heath P.D."/>
            <person name="Holmes S."/>
            <person name="Holt K."/>
            <person name="Howden P.J."/>
            <person name="Hunt A.R."/>
            <person name="Hunt S.E."/>
            <person name="Hunter G."/>
            <person name="Isherwood J."/>
            <person name="James R."/>
            <person name="Johnson C."/>
            <person name="Johnson D."/>
            <person name="Joy A."/>
            <person name="Kay M."/>
            <person name="Kershaw J.K."/>
            <person name="Kibukawa M."/>
            <person name="Kimberley A.M."/>
            <person name="King A."/>
            <person name="Knights A.J."/>
            <person name="Lad H."/>
            <person name="Laird G."/>
            <person name="Lawlor S."/>
            <person name="Leongamornlert D.A."/>
            <person name="Lloyd D.M."/>
            <person name="Loveland J."/>
            <person name="Lovell J."/>
            <person name="Lush M.J."/>
            <person name="Lyne R."/>
            <person name="Martin S."/>
            <person name="Mashreghi-Mohammadi M."/>
            <person name="Matthews L."/>
            <person name="Matthews N.S.W."/>
            <person name="McLaren S."/>
            <person name="Milne S."/>
            <person name="Mistry S."/>
            <person name="Moore M.J.F."/>
            <person name="Nickerson T."/>
            <person name="O'Dell C.N."/>
            <person name="Oliver K."/>
            <person name="Palmeiri A."/>
            <person name="Palmer S.A."/>
            <person name="Parker A."/>
            <person name="Patel D."/>
            <person name="Pearce A.V."/>
            <person name="Peck A.I."/>
            <person name="Pelan S."/>
            <person name="Phelps K."/>
            <person name="Phillimore B.J."/>
            <person name="Plumb R."/>
            <person name="Rajan J."/>
            <person name="Raymond C."/>
            <person name="Rouse G."/>
            <person name="Saenphimmachak C."/>
            <person name="Sehra H.K."/>
            <person name="Sheridan E."/>
            <person name="Shownkeen R."/>
            <person name="Sims S."/>
            <person name="Skuce C.D."/>
            <person name="Smith M."/>
            <person name="Steward C."/>
            <person name="Subramanian S."/>
            <person name="Sycamore N."/>
            <person name="Tracey A."/>
            <person name="Tromans A."/>
            <person name="Van Helmond Z."/>
            <person name="Wall M."/>
            <person name="Wallis J.M."/>
            <person name="White S."/>
            <person name="Whitehead S.L."/>
            <person name="Wilkinson J.E."/>
            <person name="Willey D.L."/>
            <person name="Williams H."/>
            <person name="Wilming L."/>
            <person name="Wray P.W."/>
            <person name="Wu Z."/>
            <person name="Coulson A."/>
            <person name="Vaudin M."/>
            <person name="Sulston J.E."/>
            <person name="Durbin R.M."/>
            <person name="Hubbard T."/>
            <person name="Wooster R."/>
            <person name="Dunham I."/>
            <person name="Carter N.P."/>
            <person name="McVean G."/>
            <person name="Ross M.T."/>
            <person name="Harrow J."/>
            <person name="Olson M.V."/>
            <person name="Beck S."/>
            <person name="Rogers J."/>
            <person name="Bentley D.R."/>
        </authorList>
    </citation>
    <scope>NUCLEOTIDE SEQUENCE [LARGE SCALE GENOMIC DNA]</scope>
</reference>
<reference key="5">
    <citation type="journal article" date="2004" name="Genome Res.">
        <title>The status, quality, and expansion of the NIH full-length cDNA project: the Mammalian Gene Collection (MGC).</title>
        <authorList>
            <consortium name="The MGC Project Team"/>
        </authorList>
    </citation>
    <scope>NUCLEOTIDE SEQUENCE [LARGE SCALE MRNA]</scope>
    <scope>VARIANTS SER-55; ALA-82 AND ALA-112</scope>
    <source>
        <tissue>Pancreas</tissue>
        <tissue>Spleen</tissue>
    </source>
</reference>
<reference key="6">
    <citation type="journal article" date="2001" name="J. Leukoc. Biol.">
        <title>Immunocytochemical localization of peptidylarginine deiminase in human eosinophils and neutrophils.</title>
        <authorList>
            <person name="Asaga H."/>
            <person name="Nakashima K."/>
            <person name="Senshu T."/>
            <person name="Ishigami A."/>
            <person name="Yamada M."/>
        </authorList>
    </citation>
    <scope>TISSUE SPECIFICITY</scope>
    <scope>SUBCELLULAR LOCATION</scope>
</reference>
<reference key="7">
    <citation type="journal article" date="2003" name="Nat. Genet.">
        <title>Functional haplotypes of PADI4, encoding citrullinating enzyme peptidylarginine deiminase 4, are associated with rheumatoid arthritis.</title>
        <authorList>
            <person name="Suzuki A."/>
            <person name="Yamada R."/>
            <person name="Chang X."/>
            <person name="Tokuhiro S."/>
            <person name="Sawada T."/>
            <person name="Suzuki M."/>
            <person name="Nagasaki M."/>
            <person name="Nakayama-Hamada M."/>
            <person name="Kawaida R."/>
            <person name="Ono M."/>
            <person name="Ohtsuki M."/>
            <person name="Furukawa H."/>
            <person name="Yoshino S."/>
            <person name="Yukioka M."/>
            <person name="Tohma S."/>
            <person name="Matsubara T."/>
            <person name="Wakitani S."/>
            <person name="Teshima R."/>
            <person name="Nishioka Y."/>
            <person name="Sekine A."/>
            <person name="Iida A."/>
            <person name="Takahashi A."/>
            <person name="Tsunoda T."/>
            <person name="Nakamura Y."/>
            <person name="Yamamoto K."/>
        </authorList>
    </citation>
    <scope>INVOLVEMENT IN RA</scope>
</reference>
<reference key="8">
    <citation type="journal article" date="2004" name="Cell">
        <title>Histone deimination antagonizes arginine methylation.</title>
        <authorList>
            <person name="Cuthbert G.L."/>
            <person name="Daujat S."/>
            <person name="Snowden A.W."/>
            <person name="Erdjument-Bromage H."/>
            <person name="Hagiwara T."/>
            <person name="Yamada M."/>
            <person name="Schneider R."/>
            <person name="Gregory P.D."/>
            <person name="Tempst P."/>
            <person name="Bannister A.J."/>
            <person name="Kouzarides T."/>
        </authorList>
    </citation>
    <scope>FUNCTION</scope>
</reference>
<reference key="9">
    <citation type="journal article" date="2004" name="Science">
        <title>Human PAD4 regulates histone arginine methylation levels via demethylimination.</title>
        <authorList>
            <person name="Wang Y."/>
            <person name="Wysocka J."/>
            <person name="Sayegh J."/>
            <person name="Lee Y.-H."/>
            <person name="Perlin J.R."/>
            <person name="Leonelli L."/>
            <person name="Sonbuchner L.S."/>
            <person name="McDonald C.H."/>
            <person name="Cook R.G."/>
            <person name="Dou Y."/>
            <person name="Roeder R.G."/>
            <person name="Clarke S."/>
            <person name="Stallcup M.R."/>
            <person name="Allis C.D."/>
            <person name="Coonrod S.A."/>
        </authorList>
    </citation>
    <scope>FUNCTION</scope>
</reference>
<reference key="10">
    <citation type="journal article" date="2005" name="Biochem. Biophys. Res. Commun.">
        <title>Comparison of enzymatic properties between hPADI2 and hPADI4.</title>
        <authorList>
            <person name="Nakayama-Hamada M."/>
            <person name="Suzuki A."/>
            <person name="Kubota K."/>
            <person name="Takazawa T."/>
            <person name="Ohsaka M."/>
            <person name="Kawaida R."/>
            <person name="Ono M."/>
            <person name="Kasuya A."/>
            <person name="Furukawa H."/>
            <person name="Yamada R."/>
            <person name="Yamamoto K."/>
        </authorList>
    </citation>
    <scope>SUBCELLULAR LOCATION</scope>
    <scope>BIOPHYSICOCHEMICAL PROPERTIES</scope>
    <scope>COFACTOR</scope>
</reference>
<reference key="11">
    <citation type="journal article" date="2005" name="Proc. Natl. Acad. Sci. U.S.A.">
        <title>Regulation of coactivator complex assembly and function by protein arginine methylation and demethylimination.</title>
        <authorList>
            <person name="Lee Y.-H."/>
            <person name="Coonrod S.A."/>
            <person name="Kraus W.L."/>
            <person name="Jelinek M.A."/>
            <person name="Stallcup M.R."/>
        </authorList>
    </citation>
    <scope>FUNCTION IN CITRULLINATION OF EP300</scope>
</reference>
<reference key="12">
    <citation type="journal article" date="2008" name="J. Immunol.">
        <title>Histone deimination as a response to inflammatory stimuli in neutrophils.</title>
        <authorList>
            <person name="Neeli I."/>
            <person name="Khan S.N."/>
            <person name="Radic M."/>
        </authorList>
    </citation>
    <scope>FUNCTION</scope>
</reference>
<reference key="13">
    <citation type="journal article" date="2010" name="Arthritis Rheum.">
        <title>Autocitrullination of human peptidyl arginine deiminase type 4 regulates protein citrullination during cell activation.</title>
        <authorList>
            <person name="Andrade F."/>
            <person name="Darrah E."/>
            <person name="Gucek M."/>
            <person name="Cole R.N."/>
            <person name="Rosen A."/>
            <person name="Zhu X."/>
        </authorList>
    </citation>
    <scope>CITRULLINATION AT ARG-205; ARG-212; ARG-218; ARG-372; ARG-374 AND ARG-383</scope>
</reference>
<reference key="14">
    <citation type="journal article" date="2004" name="Nat. Struct. Mol. Biol.">
        <title>Structural basis for Ca(2+)-induced activation of human PAD4.</title>
        <authorList>
            <person name="Arita K."/>
            <person name="Hashimoto H."/>
            <person name="Shimizu T."/>
            <person name="Nakashima K."/>
            <person name="Yamada M."/>
            <person name="Sato M."/>
        </authorList>
    </citation>
    <scope>X-RAY CRYSTALLOGRAPHY (2.8 ANGSTROMS) IN COMPLEX WITH CALCIUM AND HISTONE H3 N-TERMINUS</scope>
    <scope>X-RAY CRYSTALLOGRAPHY (2.6 ANGSTROMS) IN COMPLEX WITH CALCIUM AND HISTONE H4 N-TERMINUS</scope>
    <scope>X-RAY CRYSTALLOGRAPHY (2.3 ANGSTROMS) IN COMPLEX WITH CALCIUM AND BENZOYL-ARGININE AMIDE</scope>
    <scope>ACTIVE SITE</scope>
    <scope>MUTAGENESIS OF ARG-374 AND CYS-645</scope>
</reference>
<reference key="15">
    <citation type="journal article" date="2006" name="Proc. Natl. Acad. Sci. U.S.A.">
        <title>Structural basis for histone N-terminal recognition by human peptidylarginine deiminase 4.</title>
        <authorList>
            <person name="Arita K."/>
            <person name="Shimizu T."/>
            <person name="Hashimoto H."/>
            <person name="Hidaka Y."/>
            <person name="Yamada M."/>
            <person name="Sato M."/>
        </authorList>
    </citation>
    <scope>X-RAY CRYSTALLOGRAPHY (2.10 ANGSTROMS) IN COMPLEX WITH CALCIUM AND HISTONE H3 AND H4 N-TERMINUS</scope>
    <scope>COFACTOR</scope>
    <scope>FUNCTION</scope>
    <scope>CATALYTIC ACTIVITY</scope>
    <scope>MUTAGENESIS OF ARG-374</scope>
</reference>
<reference key="16">
    <citation type="journal article" date="2006" name="Biochemistry">
        <title>Inhibitors and inactivators of protein arginine deiminase 4: functional and structural characterization.</title>
        <authorList>
            <person name="Luo Y."/>
            <person name="Arita K."/>
            <person name="Bhatia M."/>
            <person name="Knuckley B."/>
            <person name="Lee Y.H."/>
            <person name="Stallcup M.R."/>
            <person name="Sato M."/>
            <person name="Thompson P.R."/>
        </authorList>
    </citation>
    <scope>X-RAY CRYSTALLOGRAPHY (2.3 ANGSTROMS) IN COMPLEX WITH CALCIUM</scope>
    <scope>COFACTOR</scope>
    <scope>ACTIVITY REGULATION</scope>
</reference>
<reference key="17">
    <citation type="journal article" date="2011" name="Acta Crystallogr. D">
        <title>Structural and biochemical analyses of the human PAD4 variant encoded by a functional haplotype gene.</title>
        <authorList>
            <person name="Horikoshi N."/>
            <person name="Tachiwana H."/>
            <person name="Saito K."/>
            <person name="Osakabe A."/>
            <person name="Sato M."/>
            <person name="Yamada M."/>
            <person name="Akashi S."/>
            <person name="Nishimura Y."/>
            <person name="Kagawa W."/>
            <person name="Kurumizaka H."/>
        </authorList>
    </citation>
    <scope>X-RAY CRYSTALLOGRAPHY (2.7 ANGSTROMS)</scope>
    <scope>FUNCTION</scope>
    <scope>CATALYTIC ACTIVITY</scope>
    <scope>CHARACTERIZATION OF VARIANTS SER-55; ALA-82 AND ALA-112</scope>
</reference>
<reference key="18">
    <citation type="journal article" date="2011" name="J. Med. Chem.">
        <title>The development of N-alpha-(2-carboxyl)benzoyl-N(5)-(2-fluoro-1-iminoethyl)-L-ornithine amide (o-F-amidine) and N-alpha-(2-Carboxyl)benzoyl-N5-(2-chloro-1-iminoethyl)-L-ornithine amide (o-Cl-amidine) as second generation protein arginine deiminase (PAD) inhibitors.</title>
        <authorList>
            <person name="Causey C.P."/>
            <person name="Jones J.E."/>
            <person name="Slack J.L."/>
            <person name="Kamei D."/>
            <person name="Jones L.E."/>
            <person name="Subramanian V."/>
            <person name="Knuckley B."/>
            <person name="Ebrahimi P."/>
            <person name="Chumanevich A.A."/>
            <person name="Luo Y."/>
            <person name="Hashimoto H."/>
            <person name="Sato M."/>
            <person name="Hofseth L.J."/>
            <person name="Thompson P.R."/>
        </authorList>
    </citation>
    <scope>X-RAY CRYSTALLOGRAPHY (2.5 ANGSTROMS) IN COMPLEX WITH INHIBITOR</scope>
    <scope>ACTIVITY REGULATION</scope>
    <scope>MUTAGENESIS OF GLN-346; ARG-374 AND ARG-639</scope>
</reference>
<reference evidence="21" key="19">
    <citation type="journal article" date="2012" name="ACS Chem. Biol.">
        <title>Synthesis and screening of a haloacetamidine containing library to identify PAD4 selective inhibitors.</title>
        <authorList>
            <person name="Jones J.E."/>
            <person name="Slack J.L."/>
            <person name="Fang P."/>
            <person name="Zhang X."/>
            <person name="Subramanian V."/>
            <person name="Causey C.P."/>
            <person name="Coonrod S.A."/>
            <person name="Guo M."/>
            <person name="Thompson P.R."/>
        </authorList>
    </citation>
    <scope>X-RAY CRYSTALLOGRAPHY (2.98 ANGSTROMS) IN COMPLEX WITH TDFA</scope>
    <scope>ACTIVITY REGULATION</scope>
</reference>
<reference key="20">
    <citation type="journal article" date="2004" name="J. Mol. Med.">
        <title>High variability of peptidylarginine deiminase 4 (PADI4) in a healthy white population: characterization of six new variants of PADI4 exons 2-4 by a novel haplotype-specific sequencing-based approach.</title>
        <authorList>
            <person name="Hoppe B."/>
            <person name="Heymann G.A."/>
            <person name="Tolou F."/>
            <person name="Kiesewetter H."/>
            <person name="Doerner T."/>
            <person name="Salama A."/>
        </authorList>
    </citation>
    <scope>VARIANTS ASN-89; THR-102 AND THR-131</scope>
</reference>
<name>PADI4_HUMAN</name>
<keyword id="KW-0002">3D-structure</keyword>
<keyword id="KW-0106">Calcium</keyword>
<keyword id="KW-0156">Chromatin regulator</keyword>
<keyword id="KW-0164">Citrullination</keyword>
<keyword id="KW-0963">Cytoplasm</keyword>
<keyword id="KW-0378">Hydrolase</keyword>
<keyword id="KW-0391">Immunity</keyword>
<keyword id="KW-0399">Innate immunity</keyword>
<keyword id="KW-0479">Metal-binding</keyword>
<keyword id="KW-0539">Nucleus</keyword>
<keyword id="KW-1267">Proteomics identification</keyword>
<keyword id="KW-1185">Reference proteome</keyword>
<keyword id="KW-0804">Transcription</keyword>
<keyword id="KW-0805">Transcription regulation</keyword>
<feature type="chain" id="PRO_0000220033" description="Protein-arginine deiminase type-4">
    <location>
        <begin position="1"/>
        <end position="663"/>
    </location>
</feature>
<feature type="active site" evidence="6">
    <location>
        <position position="350"/>
    </location>
</feature>
<feature type="active site" evidence="6">
    <location>
        <position position="471"/>
    </location>
</feature>
<feature type="active site" evidence="6">
    <location>
        <position position="473"/>
    </location>
</feature>
<feature type="active site" evidence="6">
    <location>
        <position position="645"/>
    </location>
</feature>
<feature type="binding site" evidence="6 13 14">
    <location>
        <position position="153"/>
    </location>
    <ligand>
        <name>Ca(2+)</name>
        <dbReference type="ChEBI" id="CHEBI:29108"/>
        <label>1</label>
    </ligand>
</feature>
<feature type="binding site" evidence="6 13 14">
    <location>
        <position position="155"/>
    </location>
    <ligand>
        <name>Ca(2+)</name>
        <dbReference type="ChEBI" id="CHEBI:29108"/>
        <label>1</label>
    </ligand>
</feature>
<feature type="binding site" evidence="6 13 14">
    <location>
        <position position="155"/>
    </location>
    <ligand>
        <name>Ca(2+)</name>
        <dbReference type="ChEBI" id="CHEBI:29108"/>
        <label>2</label>
    </ligand>
</feature>
<feature type="binding site" evidence="6 13 14">
    <location>
        <position position="157"/>
    </location>
    <ligand>
        <name>Ca(2+)</name>
        <dbReference type="ChEBI" id="CHEBI:29108"/>
        <label>1</label>
    </ligand>
</feature>
<feature type="binding site" evidence="6 13 14">
    <location>
        <position position="157"/>
    </location>
    <ligand>
        <name>Ca(2+)</name>
        <dbReference type="ChEBI" id="CHEBI:29108"/>
        <label>2</label>
    </ligand>
</feature>
<feature type="binding site" evidence="6 13 14">
    <location>
        <position position="165"/>
    </location>
    <ligand>
        <name>Ca(2+)</name>
        <dbReference type="ChEBI" id="CHEBI:29108"/>
        <label>1</label>
    </ligand>
</feature>
<feature type="binding site" evidence="6 13 14">
    <location>
        <position position="165"/>
    </location>
    <ligand>
        <name>Ca(2+)</name>
        <dbReference type="ChEBI" id="CHEBI:29108"/>
        <label>3</label>
    </ligand>
</feature>
<feature type="binding site" evidence="6 13 14">
    <location>
        <position position="168"/>
    </location>
    <ligand>
        <name>Ca(2+)</name>
        <dbReference type="ChEBI" id="CHEBI:29108"/>
        <label>3</label>
    </ligand>
</feature>
<feature type="binding site" evidence="6 13 14">
    <location>
        <position position="170"/>
    </location>
    <ligand>
        <name>Ca(2+)</name>
        <dbReference type="ChEBI" id="CHEBI:29108"/>
        <label>3</label>
    </ligand>
</feature>
<feature type="binding site" evidence="6 13 14">
    <location>
        <position position="176"/>
    </location>
    <ligand>
        <name>Ca(2+)</name>
        <dbReference type="ChEBI" id="CHEBI:29108"/>
        <label>1</label>
    </ligand>
</feature>
<feature type="binding site" evidence="6 13 14">
    <location>
        <position position="179"/>
    </location>
    <ligand>
        <name>Ca(2+)</name>
        <dbReference type="ChEBI" id="CHEBI:29108"/>
        <label>1</label>
    </ligand>
</feature>
<feature type="binding site" evidence="6 13 14">
    <location>
        <position position="179"/>
    </location>
    <ligand>
        <name>Ca(2+)</name>
        <dbReference type="ChEBI" id="CHEBI:29108"/>
        <label>2</label>
    </ligand>
</feature>
<feature type="binding site" evidence="6 13 14">
    <location>
        <position position="349"/>
    </location>
    <ligand>
        <name>Ca(2+)</name>
        <dbReference type="ChEBI" id="CHEBI:29108"/>
        <label>4</label>
    </ligand>
</feature>
<feature type="binding site" evidence="6 13 14">
    <location>
        <position position="351"/>
    </location>
    <ligand>
        <name>Ca(2+)</name>
        <dbReference type="ChEBI" id="CHEBI:29108"/>
        <label>5</label>
    </ligand>
</feature>
<feature type="binding site" evidence="6 13 14">
    <location>
        <position position="353"/>
    </location>
    <ligand>
        <name>Ca(2+)</name>
        <dbReference type="ChEBI" id="CHEBI:29108"/>
        <label>4</label>
    </ligand>
</feature>
<feature type="binding site" evidence="6 13 14">
    <location>
        <position position="369"/>
    </location>
    <ligand>
        <name>Ca(2+)</name>
        <dbReference type="ChEBI" id="CHEBI:29108"/>
        <label>5</label>
    </ligand>
</feature>
<feature type="binding site" evidence="6 13 14">
    <location>
        <position position="370"/>
    </location>
    <ligand>
        <name>Ca(2+)</name>
        <dbReference type="ChEBI" id="CHEBI:29108"/>
        <label>5</label>
    </ligand>
</feature>
<feature type="binding site" evidence="6 13 14">
    <location>
        <position position="373"/>
    </location>
    <ligand>
        <name>Ca(2+)</name>
        <dbReference type="ChEBI" id="CHEBI:29108"/>
        <label>5</label>
    </ligand>
</feature>
<feature type="binding site" evidence="18">
    <location>
        <position position="374"/>
    </location>
    <ligand>
        <name>substrate</name>
    </ligand>
</feature>
<feature type="binding site" evidence="6 13 14">
    <location>
        <position position="388"/>
    </location>
    <ligand>
        <name>Ca(2+)</name>
        <dbReference type="ChEBI" id="CHEBI:29108"/>
        <label>2</label>
    </ligand>
</feature>
<feature type="binding site" evidence="6 13 14">
    <location>
        <position position="407"/>
    </location>
    <ligand>
        <name>Ca(2+)</name>
        <dbReference type="ChEBI" id="CHEBI:29108"/>
        <label>4</label>
    </ligand>
</feature>
<feature type="binding site" evidence="6 13 14">
    <location>
        <position position="410"/>
    </location>
    <ligand>
        <name>Ca(2+)</name>
        <dbReference type="ChEBI" id="CHEBI:29108"/>
        <label>4</label>
    </ligand>
</feature>
<feature type="binding site" evidence="6 13 14">
    <location>
        <position position="411"/>
    </location>
    <ligand>
        <name>Ca(2+)</name>
        <dbReference type="ChEBI" id="CHEBI:29108"/>
        <label>4</label>
    </ligand>
</feature>
<feature type="binding site" evidence="18">
    <location>
        <position position="639"/>
    </location>
    <ligand>
        <name>substrate</name>
    </ligand>
</feature>
<feature type="modified residue" description="Citrulline" evidence="16">
    <location>
        <position position="205"/>
    </location>
</feature>
<feature type="modified residue" description="Citrulline" evidence="16">
    <location>
        <position position="212"/>
    </location>
</feature>
<feature type="modified residue" description="Citrulline" evidence="16">
    <location>
        <position position="218"/>
    </location>
</feature>
<feature type="modified residue" description="Citrulline" evidence="16">
    <location>
        <position position="372"/>
    </location>
</feature>
<feature type="modified residue" description="Citrulline" evidence="16">
    <location>
        <position position="374"/>
    </location>
</feature>
<feature type="modified residue" description="Citrulline" evidence="16">
    <location>
        <position position="383"/>
    </location>
</feature>
<feature type="sequence variant" id="VAR_053560" description="In dbSNP:rs35381732.">
    <original>R</original>
    <variation>H</variation>
    <location>
        <position position="8"/>
    </location>
</feature>
<feature type="sequence variant" id="VAR_020639" description="Does not affect catalytic activity; dbSNP:rs11203366." evidence="2 10 17">
    <original>G</original>
    <variation>S</variation>
    <location>
        <position position="55"/>
    </location>
</feature>
<feature type="sequence variant" id="VAR_053561" description="In dbSNP:rs35809521.">
    <original>T</original>
    <variation>M</variation>
    <location>
        <position position="79"/>
    </location>
</feature>
<feature type="sequence variant" id="VAR_020640" description="Does not affect catalytic activity; dbSNP:rs11203367." evidence="2 10 17">
    <original>V</original>
    <variation>A</variation>
    <location>
        <position position="82"/>
    </location>
</feature>
<feature type="sequence variant" id="VAR_027401" description="In dbSNP:rs143187209." evidence="7">
    <original>D</original>
    <variation>N</variation>
    <location>
        <position position="89"/>
    </location>
</feature>
<feature type="sequence variant" id="VAR_027402" description="In dbSNP:rs34309058." evidence="7">
    <original>P</original>
    <variation>T</variation>
    <location>
        <position position="102"/>
    </location>
</feature>
<feature type="sequence variant" id="VAR_020641" description="Does not affect catalytic activity; dbSNP:rs874881." evidence="2 10 17">
    <original>G</original>
    <variation>A</variation>
    <location>
        <position position="112"/>
    </location>
</feature>
<feature type="sequence variant" id="VAR_027403" description="In dbSNP:rs12733102." evidence="7">
    <original>R</original>
    <variation>T</variation>
    <location>
        <position position="131"/>
    </location>
</feature>
<feature type="sequence variant" id="VAR_027404" description="In dbSNP:rs11588132.">
    <original>M</original>
    <variation>T</variation>
    <location>
        <position position="164"/>
    </location>
</feature>
<feature type="sequence variant" id="VAR_053562" description="In dbSNP:rs35903413.">
    <original>D</original>
    <variation>N</variation>
    <location>
        <position position="260"/>
    </location>
</feature>
<feature type="sequence variant" id="VAR_020642" description="In dbSNP:rs1748020." evidence="5">
    <original>S</original>
    <variation>F</variation>
    <location>
        <position position="275"/>
    </location>
</feature>
<feature type="mutagenesis site" description="Impaired binding of TDFA Inhibitor." evidence="18">
    <original>Q</original>
    <variation>A</variation>
    <location>
        <position position="346"/>
    </location>
</feature>
<feature type="mutagenesis site" description="Strongly reduces enzymatic activity." evidence="6 13 18">
    <original>R</original>
    <variation>A</variation>
    <location>
        <position position="374"/>
    </location>
</feature>
<feature type="mutagenesis site" description="Impaired binding of TDFA Inhibitor." evidence="6 13 18">
    <original>R</original>
    <variation>Q</variation>
    <location>
        <position position="374"/>
    </location>
</feature>
<feature type="mutagenesis site" description="Impaired binding of TDFA Inhibitor." evidence="18">
    <original>R</original>
    <variation>Q</variation>
    <location>
        <position position="639"/>
    </location>
</feature>
<feature type="mutagenesis site" description="Abolishes enzymatic activity." evidence="6">
    <original>C</original>
    <variation>A</variation>
    <location>
        <position position="645"/>
    </location>
</feature>
<feature type="sequence conflict" description="In Ref. 3; BAF83196." evidence="20" ref="3">
    <original>I</original>
    <variation>V</variation>
    <location>
        <position position="149"/>
    </location>
</feature>
<feature type="sequence conflict" description="In Ref. 3; BAG37357." evidence="20" ref="3">
    <original>M</original>
    <variation>T</variation>
    <location>
        <position position="247"/>
    </location>
</feature>
<feature type="sequence conflict" description="In Ref. 3; BAF83196." evidence="20" ref="3">
    <original>K</original>
    <variation>E</variation>
    <location>
        <position position="657"/>
    </location>
</feature>
<feature type="strand" evidence="23">
    <location>
        <begin position="4"/>
        <end position="8"/>
    </location>
</feature>
<feature type="strand" evidence="24">
    <location>
        <begin position="11"/>
        <end position="13"/>
    </location>
</feature>
<feature type="strand" evidence="23">
    <location>
        <begin position="15"/>
        <end position="20"/>
    </location>
</feature>
<feature type="strand" evidence="23">
    <location>
        <begin position="23"/>
        <end position="28"/>
    </location>
</feature>
<feature type="helix" evidence="27">
    <location>
        <begin position="30"/>
        <end position="32"/>
    </location>
</feature>
<feature type="strand" evidence="23">
    <location>
        <begin position="39"/>
        <end position="44"/>
    </location>
</feature>
<feature type="strand" evidence="23">
    <location>
        <begin position="48"/>
        <end position="51"/>
    </location>
</feature>
<feature type="strand" evidence="23">
    <location>
        <begin position="77"/>
        <end position="82"/>
    </location>
</feature>
<feature type="strand" evidence="22">
    <location>
        <begin position="85"/>
        <end position="88"/>
    </location>
</feature>
<feature type="strand" evidence="23">
    <location>
        <begin position="90"/>
        <end position="98"/>
    </location>
</feature>
<feature type="strand" evidence="23">
    <location>
        <begin position="101"/>
        <end position="118"/>
    </location>
</feature>
<feature type="strand" evidence="29">
    <location>
        <begin position="123"/>
        <end position="125"/>
    </location>
</feature>
<feature type="turn" evidence="28">
    <location>
        <begin position="133"/>
        <end position="137"/>
    </location>
</feature>
<feature type="strand" evidence="23">
    <location>
        <begin position="148"/>
        <end position="150"/>
    </location>
</feature>
<feature type="strand" evidence="26">
    <location>
        <begin position="158"/>
        <end position="160"/>
    </location>
</feature>
<feature type="helix" evidence="23">
    <location>
        <begin position="165"/>
        <end position="167"/>
    </location>
</feature>
<feature type="strand" evidence="23">
    <location>
        <begin position="168"/>
        <end position="170"/>
    </location>
</feature>
<feature type="helix" evidence="23">
    <location>
        <begin position="174"/>
        <end position="179"/>
    </location>
</feature>
<feature type="strand" evidence="23">
    <location>
        <begin position="180"/>
        <end position="189"/>
    </location>
</feature>
<feature type="helix" evidence="23">
    <location>
        <begin position="193"/>
        <end position="195"/>
    </location>
</feature>
<feature type="strand" evidence="23">
    <location>
        <begin position="196"/>
        <end position="202"/>
    </location>
</feature>
<feature type="turn" evidence="23">
    <location>
        <begin position="205"/>
        <end position="207"/>
    </location>
</feature>
<feature type="helix" evidence="23">
    <location>
        <begin position="208"/>
        <end position="210"/>
    </location>
</feature>
<feature type="strand" evidence="23">
    <location>
        <begin position="211"/>
        <end position="215"/>
    </location>
</feature>
<feature type="turn" evidence="30">
    <location>
        <begin position="217"/>
        <end position="220"/>
    </location>
</feature>
<feature type="strand" evidence="23">
    <location>
        <begin position="226"/>
        <end position="230"/>
    </location>
</feature>
<feature type="strand" evidence="23">
    <location>
        <begin position="233"/>
        <end position="238"/>
    </location>
</feature>
<feature type="strand" evidence="23">
    <location>
        <begin position="242"/>
        <end position="253"/>
    </location>
</feature>
<feature type="strand" evidence="23">
    <location>
        <begin position="263"/>
        <end position="273"/>
    </location>
</feature>
<feature type="strand" evidence="26">
    <location>
        <begin position="277"/>
        <end position="279"/>
    </location>
</feature>
<feature type="strand" evidence="23">
    <location>
        <begin position="282"/>
        <end position="293"/>
    </location>
</feature>
<feature type="strand" evidence="23">
    <location>
        <begin position="305"/>
        <end position="310"/>
    </location>
</feature>
<feature type="helix" evidence="23">
    <location>
        <begin position="317"/>
        <end position="329"/>
    </location>
</feature>
<feature type="strand" evidence="23">
    <location>
        <begin position="333"/>
        <end position="336"/>
    </location>
</feature>
<feature type="helix" evidence="23">
    <location>
        <begin position="339"/>
        <end position="342"/>
    </location>
</feature>
<feature type="turn" evidence="23">
    <location>
        <begin position="348"/>
        <end position="350"/>
    </location>
</feature>
<feature type="strand" evidence="23">
    <location>
        <begin position="351"/>
        <end position="359"/>
    </location>
</feature>
<feature type="strand" evidence="23">
    <location>
        <begin position="362"/>
        <end position="369"/>
    </location>
</feature>
<feature type="turn" evidence="23">
    <location>
        <begin position="375"/>
        <end position="377"/>
    </location>
</feature>
<feature type="helix" evidence="23">
    <location>
        <begin position="378"/>
        <end position="383"/>
    </location>
</feature>
<feature type="strand" evidence="23">
    <location>
        <begin position="389"/>
        <end position="393"/>
    </location>
</feature>
<feature type="strand" evidence="23">
    <location>
        <begin position="397"/>
        <end position="399"/>
    </location>
</feature>
<feature type="helix" evidence="23">
    <location>
        <begin position="403"/>
        <end position="405"/>
    </location>
</feature>
<feature type="helix" evidence="23">
    <location>
        <begin position="407"/>
        <end position="409"/>
    </location>
</feature>
<feature type="strand" evidence="23">
    <location>
        <begin position="410"/>
        <end position="412"/>
    </location>
</feature>
<feature type="strand" evidence="23">
    <location>
        <begin position="415"/>
        <end position="418"/>
    </location>
</feature>
<feature type="strand" evidence="23">
    <location>
        <begin position="421"/>
        <end position="423"/>
    </location>
</feature>
<feature type="strand" evidence="23">
    <location>
        <begin position="428"/>
        <end position="432"/>
    </location>
</feature>
<feature type="helix" evidence="23">
    <location>
        <begin position="445"/>
        <end position="453"/>
    </location>
</feature>
<feature type="helix" evidence="24">
    <location>
        <begin position="455"/>
        <end position="457"/>
    </location>
</feature>
<feature type="strand" evidence="23">
    <location>
        <begin position="460"/>
        <end position="463"/>
    </location>
</feature>
<feature type="strand" evidence="23">
    <location>
        <begin position="467"/>
        <end position="469"/>
    </location>
</feature>
<feature type="helix" evidence="23">
    <location>
        <begin position="472"/>
        <end position="474"/>
    </location>
</feature>
<feature type="strand" evidence="23">
    <location>
        <begin position="476"/>
        <end position="480"/>
    </location>
</feature>
<feature type="strand" evidence="22">
    <location>
        <begin position="482"/>
        <end position="484"/>
    </location>
</feature>
<feature type="strand" evidence="23">
    <location>
        <begin position="486"/>
        <end position="493"/>
    </location>
</feature>
<feature type="helix" evidence="23">
    <location>
        <begin position="494"/>
        <end position="506"/>
    </location>
</feature>
<feature type="turn" evidence="29">
    <location>
        <begin position="507"/>
        <end position="511"/>
    </location>
</feature>
<feature type="turn" evidence="23">
    <location>
        <begin position="515"/>
        <end position="517"/>
    </location>
</feature>
<feature type="strand" evidence="29">
    <location>
        <begin position="519"/>
        <end position="521"/>
    </location>
</feature>
<feature type="helix" evidence="23">
    <location>
        <begin position="526"/>
        <end position="531"/>
    </location>
</feature>
<feature type="helix" evidence="23">
    <location>
        <begin position="533"/>
        <end position="557"/>
    </location>
</feature>
<feature type="helix" evidence="23">
    <location>
        <begin position="561"/>
        <end position="563"/>
    </location>
</feature>
<feature type="strand" evidence="23">
    <location>
        <begin position="564"/>
        <end position="568"/>
    </location>
</feature>
<feature type="strand" evidence="23">
    <location>
        <begin position="571"/>
        <end position="573"/>
    </location>
</feature>
<feature type="helix" evidence="23">
    <location>
        <begin position="575"/>
        <end position="577"/>
    </location>
</feature>
<feature type="strand" evidence="23">
    <location>
        <begin position="579"/>
        <end position="583"/>
    </location>
</feature>
<feature type="strand" evidence="27">
    <location>
        <begin position="586"/>
        <end position="588"/>
    </location>
</feature>
<feature type="strand" evidence="23">
    <location>
        <begin position="590"/>
        <end position="592"/>
    </location>
</feature>
<feature type="strand" evidence="23">
    <location>
        <begin position="595"/>
        <end position="599"/>
    </location>
</feature>
<feature type="strand" evidence="25">
    <location>
        <begin position="607"/>
        <end position="610"/>
    </location>
</feature>
<feature type="helix" evidence="23">
    <location>
        <begin position="611"/>
        <end position="620"/>
    </location>
</feature>
<feature type="helix" evidence="23">
    <location>
        <begin position="621"/>
        <end position="623"/>
    </location>
</feature>
<feature type="strand" evidence="23">
    <location>
        <begin position="626"/>
        <end position="630"/>
    </location>
</feature>
<feature type="turn" evidence="23">
    <location>
        <begin position="633"/>
        <end position="636"/>
    </location>
</feature>
<feature type="helix" evidence="23">
    <location>
        <begin position="637"/>
        <end position="639"/>
    </location>
</feature>
<feature type="turn" evidence="23">
    <location>
        <begin position="643"/>
        <end position="646"/>
    </location>
</feature>
<feature type="strand" evidence="23">
    <location>
        <begin position="647"/>
        <end position="651"/>
    </location>
</feature>
<feature type="helix" evidence="23">
    <location>
        <begin position="658"/>
        <end position="660"/>
    </location>
</feature>
<dbReference type="EC" id="3.5.3.15" evidence="13 17"/>
<dbReference type="EMBL" id="AB017919">
    <property type="protein sequence ID" value="BAA84542.1"/>
    <property type="molecule type" value="mRNA"/>
</dbReference>
<dbReference type="EMBL" id="AJ549502">
    <property type="protein sequence ID" value="CAE47743.1"/>
    <property type="molecule type" value="Genomic_DNA"/>
</dbReference>
<dbReference type="EMBL" id="AK290507">
    <property type="protein sequence ID" value="BAF83196.1"/>
    <property type="molecule type" value="mRNA"/>
</dbReference>
<dbReference type="EMBL" id="AK314839">
    <property type="protein sequence ID" value="BAG37357.1"/>
    <property type="molecule type" value="mRNA"/>
</dbReference>
<dbReference type="EMBL" id="AC004824">
    <property type="status" value="NOT_ANNOTATED_CDS"/>
    <property type="molecule type" value="Genomic_DNA"/>
</dbReference>
<dbReference type="EMBL" id="AL590644">
    <property type="status" value="NOT_ANNOTATED_CDS"/>
    <property type="molecule type" value="Genomic_DNA"/>
</dbReference>
<dbReference type="EMBL" id="BC025718">
    <property type="protein sequence ID" value="AAH25718.1"/>
    <property type="molecule type" value="mRNA"/>
</dbReference>
<dbReference type="CCDS" id="CCDS180.1"/>
<dbReference type="RefSeq" id="NP_036519.2">
    <property type="nucleotide sequence ID" value="NM_012387.3"/>
</dbReference>
<dbReference type="PDB" id="1WD8">
    <property type="method" value="X-ray"/>
    <property type="resolution" value="2.80 A"/>
    <property type="chains" value="A=1-663"/>
</dbReference>
<dbReference type="PDB" id="1WD9">
    <property type="method" value="X-ray"/>
    <property type="resolution" value="2.60 A"/>
    <property type="chains" value="A=1-663"/>
</dbReference>
<dbReference type="PDB" id="1WDA">
    <property type="method" value="X-ray"/>
    <property type="resolution" value="2.30 A"/>
    <property type="chains" value="A=1-663"/>
</dbReference>
<dbReference type="PDB" id="2DEW">
    <property type="method" value="X-ray"/>
    <property type="resolution" value="2.10 A"/>
    <property type="chains" value="X=1-663"/>
</dbReference>
<dbReference type="PDB" id="2DEX">
    <property type="method" value="X-ray"/>
    <property type="resolution" value="2.10 A"/>
    <property type="chains" value="X=1-663"/>
</dbReference>
<dbReference type="PDB" id="2DEY">
    <property type="method" value="X-ray"/>
    <property type="resolution" value="2.25 A"/>
    <property type="chains" value="X=1-663"/>
</dbReference>
<dbReference type="PDB" id="2DW5">
    <property type="method" value="X-ray"/>
    <property type="resolution" value="2.30 A"/>
    <property type="chains" value="A=1-663"/>
</dbReference>
<dbReference type="PDB" id="3APM">
    <property type="method" value="X-ray"/>
    <property type="resolution" value="2.50 A"/>
    <property type="chains" value="A=1-663"/>
</dbReference>
<dbReference type="PDB" id="3APN">
    <property type="method" value="X-ray"/>
    <property type="resolution" value="2.70 A"/>
    <property type="chains" value="A=1-663"/>
</dbReference>
<dbReference type="PDB" id="3B1T">
    <property type="method" value="X-ray"/>
    <property type="resolution" value="2.50 A"/>
    <property type="chains" value="A=1-663"/>
</dbReference>
<dbReference type="PDB" id="3B1U">
    <property type="method" value="X-ray"/>
    <property type="resolution" value="2.10 A"/>
    <property type="chains" value="A=1-663"/>
</dbReference>
<dbReference type="PDB" id="4DKT">
    <property type="method" value="X-ray"/>
    <property type="resolution" value="2.98 A"/>
    <property type="chains" value="A=1-663"/>
</dbReference>
<dbReference type="PDB" id="4X8C">
    <property type="method" value="X-ray"/>
    <property type="resolution" value="3.10 A"/>
    <property type="chains" value="A=1-663"/>
</dbReference>
<dbReference type="PDB" id="4X8G">
    <property type="method" value="X-ray"/>
    <property type="resolution" value="3.29 A"/>
    <property type="chains" value="A=1-663"/>
</dbReference>
<dbReference type="PDB" id="5N0M">
    <property type="method" value="X-ray"/>
    <property type="resolution" value="2.18 A"/>
    <property type="chains" value="A=1-663"/>
</dbReference>
<dbReference type="PDB" id="5N0Y">
    <property type="method" value="X-ray"/>
    <property type="resolution" value="2.23 A"/>
    <property type="chains" value="A=1-663"/>
</dbReference>
<dbReference type="PDB" id="5N0Z">
    <property type="method" value="X-ray"/>
    <property type="resolution" value="2.52 A"/>
    <property type="chains" value="A=1-663"/>
</dbReference>
<dbReference type="PDB" id="5N1B">
    <property type="method" value="X-ray"/>
    <property type="resolution" value="2.90 A"/>
    <property type="chains" value="A=1-663"/>
</dbReference>
<dbReference type="PDB" id="8GOD">
    <property type="method" value="X-ray"/>
    <property type="resolution" value="2.88 A"/>
    <property type="chains" value="A=1-663"/>
</dbReference>
<dbReference type="PDB" id="8R8U">
    <property type="method" value="EM"/>
    <property type="resolution" value="3.10 A"/>
    <property type="chains" value="A/B=1-663"/>
</dbReference>
<dbReference type="PDB" id="8R8V">
    <property type="method" value="EM"/>
    <property type="resolution" value="3.60 A"/>
    <property type="chains" value="A/B=1-663"/>
</dbReference>
<dbReference type="PDB" id="8SMK">
    <property type="method" value="EM"/>
    <property type="resolution" value="3.50 A"/>
    <property type="chains" value="A/D=2-663"/>
</dbReference>
<dbReference type="PDB" id="8SML">
    <property type="method" value="EM"/>
    <property type="resolution" value="3.30 A"/>
    <property type="chains" value="A/D=2-663"/>
</dbReference>
<dbReference type="PDBsum" id="1WD8"/>
<dbReference type="PDBsum" id="1WD9"/>
<dbReference type="PDBsum" id="1WDA"/>
<dbReference type="PDBsum" id="2DEW"/>
<dbReference type="PDBsum" id="2DEX"/>
<dbReference type="PDBsum" id="2DEY"/>
<dbReference type="PDBsum" id="2DW5"/>
<dbReference type="PDBsum" id="3APM"/>
<dbReference type="PDBsum" id="3APN"/>
<dbReference type="PDBsum" id="3B1T"/>
<dbReference type="PDBsum" id="3B1U"/>
<dbReference type="PDBsum" id="4DKT"/>
<dbReference type="PDBsum" id="4X8C"/>
<dbReference type="PDBsum" id="4X8G"/>
<dbReference type="PDBsum" id="5N0M"/>
<dbReference type="PDBsum" id="5N0Y"/>
<dbReference type="PDBsum" id="5N0Z"/>
<dbReference type="PDBsum" id="5N1B"/>
<dbReference type="PDBsum" id="8GOD"/>
<dbReference type="PDBsum" id="8R8U"/>
<dbReference type="PDBsum" id="8R8V"/>
<dbReference type="PDBsum" id="8SMK"/>
<dbReference type="PDBsum" id="8SML"/>
<dbReference type="EMDB" id="EMD-19011"/>
<dbReference type="EMDB" id="EMD-19012"/>
<dbReference type="EMDB" id="EMD-40589"/>
<dbReference type="EMDB" id="EMD-40590"/>
<dbReference type="SMR" id="Q9UM07"/>
<dbReference type="BioGRID" id="117111">
    <property type="interactions" value="35"/>
</dbReference>
<dbReference type="DIP" id="DIP-50397N"/>
<dbReference type="FunCoup" id="Q9UM07">
    <property type="interactions" value="154"/>
</dbReference>
<dbReference type="IntAct" id="Q9UM07">
    <property type="interactions" value="19"/>
</dbReference>
<dbReference type="MINT" id="Q9UM07"/>
<dbReference type="STRING" id="9606.ENSP00000364597"/>
<dbReference type="BindingDB" id="Q9UM07"/>
<dbReference type="ChEMBL" id="CHEMBL6111"/>
<dbReference type="DrugBank" id="DB00207">
    <property type="generic name" value="Azithromycin"/>
</dbReference>
<dbReference type="DrugBank" id="DB09093">
    <property type="generic name" value="Chlortetracycline"/>
</dbReference>
<dbReference type="DrugBank" id="DB00155">
    <property type="generic name" value="Citrulline"/>
</dbReference>
<dbReference type="DrugBank" id="DB07449">
    <property type="generic name" value="N-[(1S)-1-(aminocarbonyl)-4-(ethanimidoylamino)butyl]benzamide"/>
</dbReference>
<dbReference type="DrugBank" id="DB01082">
    <property type="generic name" value="Streptomycin"/>
</dbReference>
<dbReference type="DrugBank" id="DB00759">
    <property type="generic name" value="Tetracycline"/>
</dbReference>
<dbReference type="DrugCentral" id="Q9UM07"/>
<dbReference type="GuidetoPHARMACOLOGY" id="2877"/>
<dbReference type="GlyGen" id="Q9UM07">
    <property type="glycosylation" value="2 sites, 1 O-linked glycan (1 site)"/>
</dbReference>
<dbReference type="iPTMnet" id="Q9UM07"/>
<dbReference type="PhosphoSitePlus" id="Q9UM07"/>
<dbReference type="BioMuta" id="PADI4"/>
<dbReference type="DMDM" id="296439260"/>
<dbReference type="MassIVE" id="Q9UM07"/>
<dbReference type="PaxDb" id="9606-ENSP00000364597"/>
<dbReference type="PeptideAtlas" id="Q9UM07"/>
<dbReference type="PRIDE" id="Q9UM07"/>
<dbReference type="ProteomicsDB" id="85166"/>
<dbReference type="Pumba" id="Q9UM07"/>
<dbReference type="ABCD" id="Q9UM07">
    <property type="antibodies" value="10 sequenced antibodies"/>
</dbReference>
<dbReference type="Antibodypedia" id="1465">
    <property type="antibodies" value="543 antibodies from 38 providers"/>
</dbReference>
<dbReference type="DNASU" id="23569"/>
<dbReference type="Ensembl" id="ENST00000375448.4">
    <property type="protein sequence ID" value="ENSP00000364597.4"/>
    <property type="gene ID" value="ENSG00000159339.13"/>
</dbReference>
<dbReference type="Ensembl" id="ENST00000628229.1">
    <property type="protein sequence ID" value="ENSP00000487021.1"/>
    <property type="gene ID" value="ENSG00000280908.2"/>
</dbReference>
<dbReference type="GeneID" id="23569"/>
<dbReference type="KEGG" id="hsa:23569"/>
<dbReference type="MANE-Select" id="ENST00000375448.4">
    <property type="protein sequence ID" value="ENSP00000364597.4"/>
    <property type="RefSeq nucleotide sequence ID" value="NM_012387.3"/>
    <property type="RefSeq protein sequence ID" value="NP_036519.2"/>
</dbReference>
<dbReference type="UCSC" id="uc001baj.3">
    <property type="organism name" value="human"/>
</dbReference>
<dbReference type="AGR" id="HGNC:18368"/>
<dbReference type="CTD" id="23569"/>
<dbReference type="DisGeNET" id="23569"/>
<dbReference type="GeneCards" id="PADI4"/>
<dbReference type="HGNC" id="HGNC:18368">
    <property type="gene designation" value="PADI4"/>
</dbReference>
<dbReference type="HPA" id="ENSG00000159339">
    <property type="expression patterns" value="Group enriched (bone marrow, lymphoid tissue)"/>
</dbReference>
<dbReference type="MalaCards" id="PADI4"/>
<dbReference type="MIM" id="180300">
    <property type="type" value="phenotype"/>
</dbReference>
<dbReference type="MIM" id="605347">
    <property type="type" value="gene"/>
</dbReference>
<dbReference type="neXtProt" id="NX_Q9UM07"/>
<dbReference type="OpenTargets" id="ENSG00000159339"/>
<dbReference type="PharmGKB" id="PA32903"/>
<dbReference type="VEuPathDB" id="HostDB:ENSG00000159339"/>
<dbReference type="eggNOG" id="ENOG502QVJA">
    <property type="taxonomic scope" value="Eukaryota"/>
</dbReference>
<dbReference type="GeneTree" id="ENSGT00940000153217"/>
<dbReference type="HOGENOM" id="CLU_021911_0_0_1"/>
<dbReference type="InParanoid" id="Q9UM07"/>
<dbReference type="OMA" id="PQEVYAC"/>
<dbReference type="OrthoDB" id="5102063at2759"/>
<dbReference type="PAN-GO" id="Q9UM07">
    <property type="GO annotations" value="4 GO annotations based on evolutionary models"/>
</dbReference>
<dbReference type="PhylomeDB" id="Q9UM07"/>
<dbReference type="TreeFam" id="TF331952"/>
<dbReference type="BioCyc" id="MetaCyc:HS08389-MONOMER"/>
<dbReference type="BRENDA" id="3.5.3.15">
    <property type="organism ID" value="2681"/>
</dbReference>
<dbReference type="PathwayCommons" id="Q9UM07"/>
<dbReference type="Reactome" id="R-HSA-3247509">
    <property type="pathway name" value="Chromatin modifying enzymes"/>
</dbReference>
<dbReference type="SignaLink" id="Q9UM07"/>
<dbReference type="SIGNOR" id="Q9UM07"/>
<dbReference type="BioGRID-ORCS" id="23569">
    <property type="hits" value="11 hits in 1163 CRISPR screens"/>
</dbReference>
<dbReference type="ChiTaRS" id="PADI4">
    <property type="organism name" value="human"/>
</dbReference>
<dbReference type="EvolutionaryTrace" id="Q9UM07"/>
<dbReference type="GeneWiki" id="PADI4"/>
<dbReference type="GenomeRNAi" id="23569"/>
<dbReference type="Pharos" id="Q9UM07">
    <property type="development level" value="Tchem"/>
</dbReference>
<dbReference type="PRO" id="PR:Q9UM07"/>
<dbReference type="Proteomes" id="UP000005640">
    <property type="component" value="Chromosome 1"/>
</dbReference>
<dbReference type="RNAct" id="Q9UM07">
    <property type="molecule type" value="protein"/>
</dbReference>
<dbReference type="Bgee" id="ENSG00000159339">
    <property type="expression patterns" value="Expressed in blood and 89 other cell types or tissues"/>
</dbReference>
<dbReference type="ExpressionAtlas" id="Q9UM07">
    <property type="expression patterns" value="baseline and differential"/>
</dbReference>
<dbReference type="GO" id="GO:0005737">
    <property type="term" value="C:cytoplasm"/>
    <property type="evidence" value="ECO:0000318"/>
    <property type="project" value="GO_Central"/>
</dbReference>
<dbReference type="GO" id="GO:0005829">
    <property type="term" value="C:cytosol"/>
    <property type="evidence" value="ECO:0000304"/>
    <property type="project" value="Reactome"/>
</dbReference>
<dbReference type="GO" id="GO:0005654">
    <property type="term" value="C:nucleoplasm"/>
    <property type="evidence" value="ECO:0000304"/>
    <property type="project" value="Reactome"/>
</dbReference>
<dbReference type="GO" id="GO:0005634">
    <property type="term" value="C:nucleus"/>
    <property type="evidence" value="ECO:0000314"/>
    <property type="project" value="UniProtKB"/>
</dbReference>
<dbReference type="GO" id="GO:0032991">
    <property type="term" value="C:protein-containing complex"/>
    <property type="evidence" value="ECO:0000315"/>
    <property type="project" value="CAFA"/>
</dbReference>
<dbReference type="GO" id="GO:0005509">
    <property type="term" value="F:calcium ion binding"/>
    <property type="evidence" value="ECO:0000314"/>
    <property type="project" value="UniProtKB"/>
</dbReference>
<dbReference type="GO" id="GO:0140794">
    <property type="term" value="F:histone arginine deiminase activity"/>
    <property type="evidence" value="ECO:0000314"/>
    <property type="project" value="UniProtKB"/>
</dbReference>
<dbReference type="GO" id="GO:0140797">
    <property type="term" value="F:histone H3R17 arginine deiminase activity"/>
    <property type="evidence" value="ECO:0000314"/>
    <property type="project" value="UniProtKB"/>
</dbReference>
<dbReference type="GO" id="GO:0140795">
    <property type="term" value="F:histone H3R2 arginine deiminase activity"/>
    <property type="evidence" value="ECO:0000314"/>
    <property type="project" value="UniProtKB"/>
</dbReference>
<dbReference type="GO" id="GO:0140798">
    <property type="term" value="F:histone H3R26 arginine deiminase activity"/>
    <property type="evidence" value="ECO:0000314"/>
    <property type="project" value="UniProtKB"/>
</dbReference>
<dbReference type="GO" id="GO:0140796">
    <property type="term" value="F:histone H3R8 arginine deiminase activity"/>
    <property type="evidence" value="ECO:0000314"/>
    <property type="project" value="UniProtKB"/>
</dbReference>
<dbReference type="GO" id="GO:0042802">
    <property type="term" value="F:identical protein binding"/>
    <property type="evidence" value="ECO:0000353"/>
    <property type="project" value="UniProtKB"/>
</dbReference>
<dbReference type="GO" id="GO:0004668">
    <property type="term" value="F:protein-arginine deiminase activity"/>
    <property type="evidence" value="ECO:0000314"/>
    <property type="project" value="UniProtKB"/>
</dbReference>
<dbReference type="GO" id="GO:0006325">
    <property type="term" value="P:chromatin organization"/>
    <property type="evidence" value="ECO:0000250"/>
    <property type="project" value="UniProtKB"/>
</dbReference>
<dbReference type="GO" id="GO:0006338">
    <property type="term" value="P:chromatin remodeling"/>
    <property type="evidence" value="ECO:0000250"/>
    <property type="project" value="UniProtKB"/>
</dbReference>
<dbReference type="GO" id="GO:0045087">
    <property type="term" value="P:innate immune response"/>
    <property type="evidence" value="ECO:0007669"/>
    <property type="project" value="UniProtKB-KW"/>
</dbReference>
<dbReference type="GO" id="GO:0006334">
    <property type="term" value="P:nucleosome assembly"/>
    <property type="evidence" value="ECO:0000250"/>
    <property type="project" value="UniProtKB"/>
</dbReference>
<dbReference type="GO" id="GO:0043687">
    <property type="term" value="P:post-translational protein modification"/>
    <property type="evidence" value="ECO:0000314"/>
    <property type="project" value="UniProtKB"/>
</dbReference>
<dbReference type="GO" id="GO:0036211">
    <property type="term" value="P:protein modification process"/>
    <property type="evidence" value="ECO:0000304"/>
    <property type="project" value="ProtInc"/>
</dbReference>
<dbReference type="GO" id="GO:0019827">
    <property type="term" value="P:stem cell population maintenance"/>
    <property type="evidence" value="ECO:0000250"/>
    <property type="project" value="UniProtKB"/>
</dbReference>
<dbReference type="CDD" id="cd04214">
    <property type="entry name" value="PAD_N"/>
    <property type="match status" value="1"/>
</dbReference>
<dbReference type="DisProt" id="DP00321"/>
<dbReference type="FunFam" id="2.60.40.1700:FF:000001">
    <property type="entry name" value="Protein-arginine deiminase type-2"/>
    <property type="match status" value="1"/>
</dbReference>
<dbReference type="FunFam" id="3.75.10.10:FF:000003">
    <property type="entry name" value="Protein-arginine deiminase type-2"/>
    <property type="match status" value="1"/>
</dbReference>
<dbReference type="FunFam" id="2.60.40.1860:FF:000003">
    <property type="entry name" value="Protein-arginine deiminase type-4"/>
    <property type="match status" value="1"/>
</dbReference>
<dbReference type="Gene3D" id="3.75.10.10">
    <property type="entry name" value="L-arginine/glycine Amidinotransferase, Chain A"/>
    <property type="match status" value="1"/>
</dbReference>
<dbReference type="Gene3D" id="2.60.40.1700">
    <property type="entry name" value="Protein-arginine deiminase, central domain"/>
    <property type="match status" value="1"/>
</dbReference>
<dbReference type="Gene3D" id="2.60.40.1860">
    <property type="entry name" value="Protein-arginine deiminase, N-terminal domain"/>
    <property type="match status" value="1"/>
</dbReference>
<dbReference type="InterPro" id="IPR008972">
    <property type="entry name" value="Cupredoxin"/>
</dbReference>
<dbReference type="InterPro" id="IPR004303">
    <property type="entry name" value="PAD"/>
</dbReference>
<dbReference type="InterPro" id="IPR013530">
    <property type="entry name" value="PAD_C"/>
</dbReference>
<dbReference type="InterPro" id="IPR036556">
    <property type="entry name" value="PAD_central_sf"/>
</dbReference>
<dbReference type="InterPro" id="IPR013732">
    <property type="entry name" value="PAD_N"/>
</dbReference>
<dbReference type="InterPro" id="IPR038685">
    <property type="entry name" value="PAD_N_sf"/>
</dbReference>
<dbReference type="InterPro" id="IPR013733">
    <property type="entry name" value="Prot_Arg_deaminase_cen_dom"/>
</dbReference>
<dbReference type="PANTHER" id="PTHR10837">
    <property type="entry name" value="PEPTIDYLARGININE DEIMINASE"/>
    <property type="match status" value="1"/>
</dbReference>
<dbReference type="PANTHER" id="PTHR10837:SF3">
    <property type="entry name" value="PROTEIN-ARGININE DEIMINASE TYPE-4"/>
    <property type="match status" value="1"/>
</dbReference>
<dbReference type="Pfam" id="PF03068">
    <property type="entry name" value="PAD"/>
    <property type="match status" value="1"/>
</dbReference>
<dbReference type="Pfam" id="PF08527">
    <property type="entry name" value="PAD_M"/>
    <property type="match status" value="1"/>
</dbReference>
<dbReference type="Pfam" id="PF08526">
    <property type="entry name" value="PAD_N"/>
    <property type="match status" value="1"/>
</dbReference>
<dbReference type="PIRSF" id="PIRSF001247">
    <property type="entry name" value="Protein-arginine_deiminase"/>
    <property type="match status" value="1"/>
</dbReference>
<dbReference type="SUPFAM" id="SSF49503">
    <property type="entry name" value="Cupredoxins"/>
    <property type="match status" value="1"/>
</dbReference>
<dbReference type="SUPFAM" id="SSF55909">
    <property type="entry name" value="Pentein"/>
    <property type="match status" value="1"/>
</dbReference>
<dbReference type="SUPFAM" id="SSF110083">
    <property type="entry name" value="Peptidylarginine deiminase Pad4, middle domain"/>
    <property type="match status" value="1"/>
</dbReference>